<sequence>MNLTNHFLVAMPSMQDPHFKRGVVYVCEHNEEGAMGLVINLPIEISVGNMLEQIEVERDLPVNNPDSLTQSVLNGGPVSEDRGFVLHQPKGQFDSSICINDELSVTTSQDILPLLGTSEAPEKFIVALGYAGWSAGQLEQELAENSWLTMEADAEVIFETPINERWDTAVARLGINPANLSIEKGHA</sequence>
<reference key="1">
    <citation type="journal article" date="2005" name="Science">
        <title>Life at depth: Photobacterium profundum genome sequence and expression analysis.</title>
        <authorList>
            <person name="Vezzi A."/>
            <person name="Campanaro S."/>
            <person name="D'Angelo M."/>
            <person name="Simonato F."/>
            <person name="Vitulo N."/>
            <person name="Lauro F.M."/>
            <person name="Cestaro A."/>
            <person name="Malacrida G."/>
            <person name="Simionati B."/>
            <person name="Cannata N."/>
            <person name="Romualdi C."/>
            <person name="Bartlett D.H."/>
            <person name="Valle G."/>
        </authorList>
    </citation>
    <scope>NUCLEOTIDE SEQUENCE [LARGE SCALE GENOMIC DNA]</scope>
    <source>
        <strain>ATCC BAA-1253 / SS9</strain>
    </source>
</reference>
<feature type="chain" id="PRO_0000258852" description="UPF0301 protein PBPRA3139">
    <location>
        <begin position="1"/>
        <end position="187"/>
    </location>
</feature>
<comment type="similarity">
    <text evidence="1">Belongs to the UPF0301 (AlgH) family.</text>
</comment>
<comment type="sequence caution" evidence="2">
    <conflict type="erroneous initiation">
        <sequence resource="EMBL-CDS" id="CAG21454"/>
    </conflict>
</comment>
<keyword id="KW-1185">Reference proteome</keyword>
<dbReference type="EMBL" id="CR378673">
    <property type="protein sequence ID" value="CAG21454.1"/>
    <property type="status" value="ALT_INIT"/>
    <property type="molecule type" value="Genomic_DNA"/>
</dbReference>
<dbReference type="RefSeq" id="WP_041394524.1">
    <property type="nucleotide sequence ID" value="NC_006370.1"/>
</dbReference>
<dbReference type="SMR" id="Q6LMM3"/>
<dbReference type="STRING" id="298386.PBPRA3139"/>
<dbReference type="KEGG" id="ppr:PBPRA3139"/>
<dbReference type="eggNOG" id="COG1678">
    <property type="taxonomic scope" value="Bacteria"/>
</dbReference>
<dbReference type="HOGENOM" id="CLU_057596_1_1_6"/>
<dbReference type="Proteomes" id="UP000000593">
    <property type="component" value="Chromosome 1"/>
</dbReference>
<dbReference type="GO" id="GO:0005829">
    <property type="term" value="C:cytosol"/>
    <property type="evidence" value="ECO:0007669"/>
    <property type="project" value="TreeGrafter"/>
</dbReference>
<dbReference type="Gene3D" id="3.40.1740.10">
    <property type="entry name" value="VC0467-like"/>
    <property type="match status" value="1"/>
</dbReference>
<dbReference type="Gene3D" id="3.30.70.1300">
    <property type="entry name" value="VC0467-like domains"/>
    <property type="match status" value="1"/>
</dbReference>
<dbReference type="HAMAP" id="MF_00758">
    <property type="entry name" value="UPF0301"/>
    <property type="match status" value="1"/>
</dbReference>
<dbReference type="InterPro" id="IPR003774">
    <property type="entry name" value="AlgH-like"/>
</dbReference>
<dbReference type="NCBIfam" id="NF001266">
    <property type="entry name" value="PRK00228.1-1"/>
    <property type="match status" value="1"/>
</dbReference>
<dbReference type="PANTHER" id="PTHR30327">
    <property type="entry name" value="UNCHARACTERIZED PROTEIN YQGE"/>
    <property type="match status" value="1"/>
</dbReference>
<dbReference type="PANTHER" id="PTHR30327:SF1">
    <property type="entry name" value="UPF0301 PROTEIN YQGE"/>
    <property type="match status" value="1"/>
</dbReference>
<dbReference type="Pfam" id="PF02622">
    <property type="entry name" value="DUF179"/>
    <property type="match status" value="1"/>
</dbReference>
<dbReference type="SUPFAM" id="SSF143456">
    <property type="entry name" value="VC0467-like"/>
    <property type="match status" value="1"/>
</dbReference>
<proteinExistence type="inferred from homology"/>
<evidence type="ECO:0000255" key="1">
    <source>
        <dbReference type="HAMAP-Rule" id="MF_00758"/>
    </source>
</evidence>
<evidence type="ECO:0000305" key="2"/>
<name>Y3139_PHOPR</name>
<organism>
    <name type="scientific">Photobacterium profundum (strain SS9)</name>
    <dbReference type="NCBI Taxonomy" id="298386"/>
    <lineage>
        <taxon>Bacteria</taxon>
        <taxon>Pseudomonadati</taxon>
        <taxon>Pseudomonadota</taxon>
        <taxon>Gammaproteobacteria</taxon>
        <taxon>Vibrionales</taxon>
        <taxon>Vibrionaceae</taxon>
        <taxon>Photobacterium</taxon>
    </lineage>
</organism>
<gene>
    <name type="ordered locus">PBPRA3139</name>
</gene>
<protein>
    <recommendedName>
        <fullName evidence="1">UPF0301 protein PBPRA3139</fullName>
    </recommendedName>
</protein>
<accession>Q6LMM3</accession>